<gene>
    <name evidence="1" type="primary">rexB</name>
    <name type="ordered locus">SSU98_0757</name>
</gene>
<protein>
    <recommendedName>
        <fullName evidence="1">ATP-dependent helicase/deoxyribonuclease subunit B</fullName>
        <ecNumber evidence="1">3.1.-.-</ecNumber>
    </recommendedName>
    <alternativeName>
        <fullName evidence="1">ATP-dependent helicase/nuclease subunit RexB</fullName>
    </alternativeName>
</protein>
<evidence type="ECO:0000255" key="1">
    <source>
        <dbReference type="HAMAP-Rule" id="MF_01453"/>
    </source>
</evidence>
<keyword id="KW-0067">ATP-binding</keyword>
<keyword id="KW-0227">DNA damage</keyword>
<keyword id="KW-0234">DNA repair</keyword>
<keyword id="KW-0238">DNA-binding</keyword>
<keyword id="KW-0269">Exonuclease</keyword>
<keyword id="KW-0347">Helicase</keyword>
<keyword id="KW-0378">Hydrolase</keyword>
<keyword id="KW-0540">Nuclease</keyword>
<keyword id="KW-0547">Nucleotide-binding</keyword>
<reference key="1">
    <citation type="journal article" date="2007" name="PLoS ONE">
        <title>A glimpse of streptococcal toxic shock syndrome from comparative genomics of S. suis 2 Chinese isolates.</title>
        <authorList>
            <person name="Chen C."/>
            <person name="Tang J."/>
            <person name="Dong W."/>
            <person name="Wang C."/>
            <person name="Feng Y."/>
            <person name="Wang J."/>
            <person name="Zheng F."/>
            <person name="Pan X."/>
            <person name="Liu D."/>
            <person name="Li M."/>
            <person name="Song Y."/>
            <person name="Zhu X."/>
            <person name="Sun H."/>
            <person name="Feng T."/>
            <person name="Guo Z."/>
            <person name="Ju A."/>
            <person name="Ge J."/>
            <person name="Dong Y."/>
            <person name="Sun W."/>
            <person name="Jiang Y."/>
            <person name="Wang J."/>
            <person name="Yan J."/>
            <person name="Yang H."/>
            <person name="Wang X."/>
            <person name="Gao G.F."/>
            <person name="Yang R."/>
            <person name="Wang J."/>
            <person name="Yu J."/>
        </authorList>
    </citation>
    <scope>NUCLEOTIDE SEQUENCE [LARGE SCALE GENOMIC DNA]</scope>
    <source>
        <strain>98HAH33</strain>
    </source>
</reference>
<proteinExistence type="inferred from homology"/>
<sequence>MKLVYTDIRNPLTQYLTEQTATFAEQGKRVFYIAPNSLSFEMERKVLEYLPEQATFDIIVTRFGQLARYLMIDRKEAGQPLDDVGLAMIFFRVLSQFEDGDLKVYGRLQTDFGFINQLVALYKELQRANMSILDLEAMDSPDKQADLVKIFLAVTDILSKEGFEHQSKLAQLTGLVETGQLDEQLKNIVLVVDGFSRFSAEEEALVSALNERVSEILIGVYASKKAVQATYAEGNVYQANVDFLRQLSAQFQTKATYIGQEPVLDSIGKFSKNMEAYYDYSGTMIDLTPADQEKIQLWEVVNQKEEVEQVATAIRQHVHQGARYKDILLLLGDVDSYKLQIGKIFDKYDIPYYFGKAEEMSHHPLVHFVESLERLRRYRFRAEDLLNLLKSGLYASISQKELDLFESYILFADMKGQAAFSRAFSVNGRADYDAEVIKEKRLVYDLTVLEPLRAKIMEPLNQLFKAGPQSGTALLEKFMAFLEAIDLPKNMEKMSRNLSEVEQEKEEQVWKSFTHLLENFHQIFGKEKLKMDDFLAILQAGMQASHYRTVPATVDVVNVKSYDLIEPHTAKYVYAIGMGQSNFPKVAKNTSLLTEEEMEKVNLVSASSSRFDLVSRENIKKNHAAMMSLLNSATEQLVISTPQIYNEGEDSLSPYIKILQKMGLKSEERGRIKTLSPQDIGHYKSLLSRLIESERPSLETEEWEGQRAFWTVLVRHLKKKLESQSIEIPTITGDIASKQLSDETLAALYPEDKPLNLSASSLTNFYNNQYLYFVRNVLRLREQESIHPTAFQHGLFLHRIFERVVMDQSELDFDQKVDKAILRTRDEAEFAMFYNQDADARYTEEVLDKIARSSATILRDNDLVEIDGQEKSFRQDKALVFDLQNGKSVHVNGTIDRLDTLQINQAVGVVDYKSSDQSFSVGDFYNGLKPQLVTYLAALQELDETKDKPVFGAMYLHLQDPIIKLKDTKNLEQLEGAANTSLVYKGLFLKEESLGLNHFYQTRNQLYTEDEFAVLLNHNQELYKQAAMDILAGRFAINPYTKDGRSVAGEQLKAITGFEADRHMGMARRLVKEAKRQDWMERMKGGQD</sequence>
<feature type="chain" id="PRO_0000379414" description="ATP-dependent helicase/deoxyribonuclease subunit B">
    <location>
        <begin position="1"/>
        <end position="1088"/>
    </location>
</feature>
<comment type="function">
    <text evidence="1">The heterodimer acts as both an ATP-dependent DNA helicase and an ATP-dependent, dual-direction single-stranded exonuclease. Recognizes the chi site generating a DNA molecule suitable for the initiation of homologous recombination. This subunit has 5' -&gt; 3' nuclease activity but not helicase activity.</text>
</comment>
<comment type="cofactor">
    <cofactor evidence="1">
        <name>Mg(2+)</name>
        <dbReference type="ChEBI" id="CHEBI:18420"/>
    </cofactor>
</comment>
<comment type="subunit">
    <text evidence="1">Heterodimer of AddA and RexB.</text>
</comment>
<comment type="miscellaneous">
    <text evidence="1">Despite having helicase-like domains, this subunit does not have helicase activity.</text>
</comment>
<comment type="similarity">
    <text evidence="1">Belongs to the helicase family. AddB/RexB type 2 subfamily.</text>
</comment>
<name>ADDB_STRS2</name>
<accession>A4W0M6</accession>
<organism>
    <name type="scientific">Streptococcus suis (strain 98HAH33)</name>
    <dbReference type="NCBI Taxonomy" id="391296"/>
    <lineage>
        <taxon>Bacteria</taxon>
        <taxon>Bacillati</taxon>
        <taxon>Bacillota</taxon>
        <taxon>Bacilli</taxon>
        <taxon>Lactobacillales</taxon>
        <taxon>Streptococcaceae</taxon>
        <taxon>Streptococcus</taxon>
    </lineage>
</organism>
<dbReference type="EC" id="3.1.-.-" evidence="1"/>
<dbReference type="EMBL" id="CP000408">
    <property type="protein sequence ID" value="ABP91915.1"/>
    <property type="molecule type" value="Genomic_DNA"/>
</dbReference>
<dbReference type="SMR" id="A4W0M6"/>
<dbReference type="KEGG" id="ssv:SSU98_0757"/>
<dbReference type="HOGENOM" id="CLU_007838_1_0_9"/>
<dbReference type="GO" id="GO:0008409">
    <property type="term" value="F:5'-3' exonuclease activity"/>
    <property type="evidence" value="ECO:0007669"/>
    <property type="project" value="UniProtKB-UniRule"/>
</dbReference>
<dbReference type="GO" id="GO:0005524">
    <property type="term" value="F:ATP binding"/>
    <property type="evidence" value="ECO:0007669"/>
    <property type="project" value="UniProtKB-UniRule"/>
</dbReference>
<dbReference type="GO" id="GO:0003690">
    <property type="term" value="F:double-stranded DNA binding"/>
    <property type="evidence" value="ECO:0007669"/>
    <property type="project" value="UniProtKB-UniRule"/>
</dbReference>
<dbReference type="GO" id="GO:0004386">
    <property type="term" value="F:helicase activity"/>
    <property type="evidence" value="ECO:0007669"/>
    <property type="project" value="UniProtKB-KW"/>
</dbReference>
<dbReference type="GO" id="GO:0016817">
    <property type="term" value="F:hydrolase activity, acting on acid anhydrides"/>
    <property type="evidence" value="ECO:0007669"/>
    <property type="project" value="InterPro"/>
</dbReference>
<dbReference type="GO" id="GO:0000724">
    <property type="term" value="P:double-strand break repair via homologous recombination"/>
    <property type="evidence" value="ECO:0007669"/>
    <property type="project" value="UniProtKB-UniRule"/>
</dbReference>
<dbReference type="Gene3D" id="3.40.50.300">
    <property type="entry name" value="P-loop containing nucleotide triphosphate hydrolases"/>
    <property type="match status" value="4"/>
</dbReference>
<dbReference type="HAMAP" id="MF_01453">
    <property type="entry name" value="AddB_type2"/>
    <property type="match status" value="1"/>
</dbReference>
<dbReference type="InterPro" id="IPR049035">
    <property type="entry name" value="ADDB_N"/>
</dbReference>
<dbReference type="InterPro" id="IPR014141">
    <property type="entry name" value="DNA_helicase_suRexB"/>
</dbReference>
<dbReference type="InterPro" id="IPR027417">
    <property type="entry name" value="P-loop_NTPase"/>
</dbReference>
<dbReference type="InterPro" id="IPR038726">
    <property type="entry name" value="PDDEXK_AddAB-type"/>
</dbReference>
<dbReference type="InterPro" id="IPR011335">
    <property type="entry name" value="Restrct_endonuc-II-like"/>
</dbReference>
<dbReference type="NCBIfam" id="TIGR02774">
    <property type="entry name" value="rexB_recomb"/>
    <property type="match status" value="1"/>
</dbReference>
<dbReference type="PANTHER" id="PTHR30591">
    <property type="entry name" value="RECBCD ENZYME SUBUNIT RECC"/>
    <property type="match status" value="1"/>
</dbReference>
<dbReference type="PANTHER" id="PTHR30591:SF1">
    <property type="entry name" value="RECBCD ENZYME SUBUNIT RECC"/>
    <property type="match status" value="1"/>
</dbReference>
<dbReference type="Pfam" id="PF21445">
    <property type="entry name" value="ADDB_N"/>
    <property type="match status" value="1"/>
</dbReference>
<dbReference type="Pfam" id="PF12705">
    <property type="entry name" value="PDDEXK_1"/>
    <property type="match status" value="1"/>
</dbReference>
<dbReference type="SUPFAM" id="SSF52540">
    <property type="entry name" value="P-loop containing nucleoside triphosphate hydrolases"/>
    <property type="match status" value="1"/>
</dbReference>
<dbReference type="SUPFAM" id="SSF52980">
    <property type="entry name" value="Restriction endonuclease-like"/>
    <property type="match status" value="1"/>
</dbReference>